<accession>Q9FG21</accession>
<protein>
    <recommendedName>
        <fullName>Putative RING-H2 finger protein ATL71</fullName>
        <ecNumber evidence="5">2.3.2.27</ecNumber>
    </recommendedName>
    <alternativeName>
        <fullName evidence="5">RING-type E3 ubiquitin transferase ATL71</fullName>
    </alternativeName>
</protein>
<comment type="catalytic activity">
    <reaction evidence="5">
        <text>S-ubiquitinyl-[E2 ubiquitin-conjugating enzyme]-L-cysteine + [acceptor protein]-L-lysine = [E2 ubiquitin-conjugating enzyme]-L-cysteine + N(6)-ubiquitinyl-[acceptor protein]-L-lysine.</text>
        <dbReference type="EC" id="2.3.2.27"/>
    </reaction>
</comment>
<comment type="pathway">
    <text>Protein modification; protein ubiquitination.</text>
</comment>
<comment type="subcellular location">
    <subcellularLocation>
        <location evidence="5">Membrane</location>
        <topology evidence="5">Single-pass membrane protein</topology>
    </subcellularLocation>
</comment>
<comment type="domain">
    <text evidence="1">The RING-type zinc finger domain mediates binding to an E2 ubiquitin-conjugating enzyme.</text>
</comment>
<comment type="similarity">
    <text evidence="5">Belongs to the RING-type zinc finger family. ATL subfamily.</text>
</comment>
<dbReference type="EC" id="2.3.2.27" evidence="5"/>
<dbReference type="EMBL" id="AP002543">
    <property type="protein sequence ID" value="BAB11398.1"/>
    <property type="molecule type" value="Genomic_DNA"/>
</dbReference>
<dbReference type="EMBL" id="CP002688">
    <property type="protein sequence ID" value="AED91023.1"/>
    <property type="molecule type" value="Genomic_DNA"/>
</dbReference>
<dbReference type="RefSeq" id="NP_196267.1">
    <property type="nucleotide sequence ID" value="NM_120732.2"/>
</dbReference>
<dbReference type="SMR" id="Q9FG21"/>
<dbReference type="PaxDb" id="3702-AT5G06490.1"/>
<dbReference type="EnsemblPlants" id="AT5G06490.1">
    <property type="protein sequence ID" value="AT5G06490.1"/>
    <property type="gene ID" value="AT5G06490"/>
</dbReference>
<dbReference type="GeneID" id="830537"/>
<dbReference type="Gramene" id="AT5G06490.1">
    <property type="protein sequence ID" value="AT5G06490.1"/>
    <property type="gene ID" value="AT5G06490"/>
</dbReference>
<dbReference type="KEGG" id="ath:AT5G06490"/>
<dbReference type="Araport" id="AT5G06490"/>
<dbReference type="TAIR" id="AT5G06490">
    <property type="gene designation" value="ATL71"/>
</dbReference>
<dbReference type="eggNOG" id="KOG0800">
    <property type="taxonomic scope" value="Eukaryota"/>
</dbReference>
<dbReference type="HOGENOM" id="CLU_013137_15_4_1"/>
<dbReference type="InParanoid" id="Q9FG21"/>
<dbReference type="OMA" id="YYCTRSH"/>
<dbReference type="OrthoDB" id="8062037at2759"/>
<dbReference type="PhylomeDB" id="Q9FG21"/>
<dbReference type="UniPathway" id="UPA00143"/>
<dbReference type="PRO" id="PR:Q9FG21"/>
<dbReference type="Proteomes" id="UP000006548">
    <property type="component" value="Chromosome 5"/>
</dbReference>
<dbReference type="ExpressionAtlas" id="Q9FG21">
    <property type="expression patterns" value="baseline and differential"/>
</dbReference>
<dbReference type="GO" id="GO:0016020">
    <property type="term" value="C:membrane"/>
    <property type="evidence" value="ECO:0007669"/>
    <property type="project" value="UniProtKB-SubCell"/>
</dbReference>
<dbReference type="GO" id="GO:0016740">
    <property type="term" value="F:transferase activity"/>
    <property type="evidence" value="ECO:0007669"/>
    <property type="project" value="UniProtKB-KW"/>
</dbReference>
<dbReference type="GO" id="GO:0008270">
    <property type="term" value="F:zinc ion binding"/>
    <property type="evidence" value="ECO:0007669"/>
    <property type="project" value="UniProtKB-KW"/>
</dbReference>
<dbReference type="GO" id="GO:0016567">
    <property type="term" value="P:protein ubiquitination"/>
    <property type="evidence" value="ECO:0007669"/>
    <property type="project" value="UniProtKB-UniPathway"/>
</dbReference>
<dbReference type="CDD" id="cd16454">
    <property type="entry name" value="RING-H2_PA-TM-RING"/>
    <property type="match status" value="1"/>
</dbReference>
<dbReference type="Gene3D" id="3.30.40.10">
    <property type="entry name" value="Zinc/RING finger domain, C3HC4 (zinc finger)"/>
    <property type="match status" value="1"/>
</dbReference>
<dbReference type="InterPro" id="IPR045899">
    <property type="entry name" value="ATL71-like"/>
</dbReference>
<dbReference type="InterPro" id="IPR001841">
    <property type="entry name" value="Znf_RING"/>
</dbReference>
<dbReference type="InterPro" id="IPR013083">
    <property type="entry name" value="Znf_RING/FYVE/PHD"/>
</dbReference>
<dbReference type="PANTHER" id="PTHR46719:SF7">
    <property type="entry name" value="RING-H2 FINGER PROTEIN ATL71-RELATED"/>
    <property type="match status" value="1"/>
</dbReference>
<dbReference type="PANTHER" id="PTHR46719">
    <property type="entry name" value="TRANSCRIPTION FACTOR C2H2 FAMILY-RELATED"/>
    <property type="match status" value="1"/>
</dbReference>
<dbReference type="Pfam" id="PF13639">
    <property type="entry name" value="zf-RING_2"/>
    <property type="match status" value="1"/>
</dbReference>
<dbReference type="SMART" id="SM00184">
    <property type="entry name" value="RING"/>
    <property type="match status" value="1"/>
</dbReference>
<dbReference type="SUPFAM" id="SSF57850">
    <property type="entry name" value="RING/U-box"/>
    <property type="match status" value="1"/>
</dbReference>
<dbReference type="PROSITE" id="PS50089">
    <property type="entry name" value="ZF_RING_2"/>
    <property type="match status" value="1"/>
</dbReference>
<organism>
    <name type="scientific">Arabidopsis thaliana</name>
    <name type="common">Mouse-ear cress</name>
    <dbReference type="NCBI Taxonomy" id="3702"/>
    <lineage>
        <taxon>Eukaryota</taxon>
        <taxon>Viridiplantae</taxon>
        <taxon>Streptophyta</taxon>
        <taxon>Embryophyta</taxon>
        <taxon>Tracheophyta</taxon>
        <taxon>Spermatophyta</taxon>
        <taxon>Magnoliopsida</taxon>
        <taxon>eudicotyledons</taxon>
        <taxon>Gunneridae</taxon>
        <taxon>Pentapetalae</taxon>
        <taxon>rosids</taxon>
        <taxon>malvids</taxon>
        <taxon>Brassicales</taxon>
        <taxon>Brassicaceae</taxon>
        <taxon>Camelineae</taxon>
        <taxon>Arabidopsis</taxon>
    </lineage>
</organism>
<sequence length="197" mass="22031">MNATVVPPYSGHWLTNTDRMGGLAYGIGVSIGILMLITTITLTSYYCTRSHISASPTTTPRTRRRQRESNGTLPPGQERFDFEDDESDTVVVEVLGLTEEVIKGFPKLPYEEARVSYSLQKESSTTSCCSICLADYKKMDMIRVLPDCNHLFHDNCVDPWLRLHPTCPVCRTSPLPSPAMTPVADVVPFSRRPMMDI</sequence>
<feature type="chain" id="PRO_0000055808" description="Putative RING-H2 finger protein ATL71">
    <location>
        <begin position="1"/>
        <end position="197"/>
    </location>
</feature>
<feature type="transmembrane region" description="Helical" evidence="2">
    <location>
        <begin position="20"/>
        <end position="40"/>
    </location>
</feature>
<feature type="zinc finger region" description="RING-type; atypical" evidence="3">
    <location>
        <begin position="129"/>
        <end position="171"/>
    </location>
</feature>
<feature type="region of interest" description="Disordered" evidence="4">
    <location>
        <begin position="53"/>
        <end position="80"/>
    </location>
</feature>
<proteinExistence type="inferred from homology"/>
<name>ATL71_ARATH</name>
<reference key="1">
    <citation type="submission" date="2000-06" db="EMBL/GenBank/DDBJ databases">
        <title>Structural analysis of Arabidopsis thaliana chromosome 5. XI.</title>
        <authorList>
            <person name="Kaneko T."/>
            <person name="Katoh T."/>
            <person name="Asamizu E."/>
            <person name="Sato S."/>
            <person name="Nakamura Y."/>
            <person name="Kotani H."/>
            <person name="Tabata S."/>
        </authorList>
    </citation>
    <scope>NUCLEOTIDE SEQUENCE [LARGE SCALE GENOMIC DNA]</scope>
    <source>
        <strain>cv. Columbia</strain>
    </source>
</reference>
<reference key="2">
    <citation type="journal article" date="2017" name="Plant J.">
        <title>Araport11: a complete reannotation of the Arabidopsis thaliana reference genome.</title>
        <authorList>
            <person name="Cheng C.Y."/>
            <person name="Krishnakumar V."/>
            <person name="Chan A.P."/>
            <person name="Thibaud-Nissen F."/>
            <person name="Schobel S."/>
            <person name="Town C.D."/>
        </authorList>
    </citation>
    <scope>GENOME REANNOTATION</scope>
    <source>
        <strain>cv. Columbia</strain>
    </source>
</reference>
<reference key="3">
    <citation type="journal article" date="2002" name="Genome Biol.">
        <title>Evaluation and classification of RING-finger domains encoded by the Arabidopsis genome.</title>
        <authorList>
            <person name="Kosarev P."/>
            <person name="Mayer K.F.X."/>
            <person name="Hardtke C.S."/>
        </authorList>
    </citation>
    <scope>GENE FAMILY ORGANIZATION</scope>
</reference>
<reference key="4">
    <citation type="journal article" date="2006" name="J. Mol. Evol.">
        <title>The ATL gene family from Arabidopsis thaliana and Oryza sativa comprises a large number of putative ubiquitin ligases of the RING-H2 type.</title>
        <authorList>
            <person name="Serrano M."/>
            <person name="Parra S."/>
            <person name="Alcaraz L.D."/>
            <person name="Guzman P."/>
        </authorList>
    </citation>
    <scope>NOMENCLATURE</scope>
    <scope>GENE FAMILY ORGANIZATION</scope>
</reference>
<keyword id="KW-0472">Membrane</keyword>
<keyword id="KW-0479">Metal-binding</keyword>
<keyword id="KW-1185">Reference proteome</keyword>
<keyword id="KW-0808">Transferase</keyword>
<keyword id="KW-0812">Transmembrane</keyword>
<keyword id="KW-1133">Transmembrane helix</keyword>
<keyword id="KW-0833">Ubl conjugation pathway</keyword>
<keyword id="KW-0862">Zinc</keyword>
<keyword id="KW-0863">Zinc-finger</keyword>
<gene>
    <name type="primary">ATL71</name>
    <name type="ordered locus">At5g06490</name>
    <name type="ORF">F15M7.2</name>
</gene>
<evidence type="ECO:0000250" key="1"/>
<evidence type="ECO:0000255" key="2"/>
<evidence type="ECO:0000255" key="3">
    <source>
        <dbReference type="PROSITE-ProRule" id="PRU00175"/>
    </source>
</evidence>
<evidence type="ECO:0000256" key="4">
    <source>
        <dbReference type="SAM" id="MobiDB-lite"/>
    </source>
</evidence>
<evidence type="ECO:0000305" key="5"/>